<feature type="chain" id="PRO_0000061600" description="Cytochrome b">
    <location>
        <begin position="1"/>
        <end position="379"/>
    </location>
</feature>
<feature type="transmembrane region" description="Helical" evidence="2">
    <location>
        <begin position="33"/>
        <end position="53"/>
    </location>
</feature>
<feature type="transmembrane region" description="Helical" evidence="2">
    <location>
        <begin position="77"/>
        <end position="98"/>
    </location>
</feature>
<feature type="transmembrane region" description="Helical" evidence="2">
    <location>
        <begin position="113"/>
        <end position="133"/>
    </location>
</feature>
<feature type="transmembrane region" description="Helical" evidence="2">
    <location>
        <begin position="178"/>
        <end position="198"/>
    </location>
</feature>
<feature type="transmembrane region" description="Helical" evidence="2">
    <location>
        <begin position="226"/>
        <end position="246"/>
    </location>
</feature>
<feature type="transmembrane region" description="Helical" evidence="2">
    <location>
        <begin position="288"/>
        <end position="308"/>
    </location>
</feature>
<feature type="transmembrane region" description="Helical" evidence="2">
    <location>
        <begin position="320"/>
        <end position="340"/>
    </location>
</feature>
<feature type="transmembrane region" description="Helical" evidence="2">
    <location>
        <begin position="347"/>
        <end position="367"/>
    </location>
</feature>
<feature type="binding site" description="axial binding residue" evidence="2">
    <location>
        <position position="83"/>
    </location>
    <ligand>
        <name>heme b</name>
        <dbReference type="ChEBI" id="CHEBI:60344"/>
        <label>b562</label>
    </ligand>
    <ligandPart>
        <name>Fe</name>
        <dbReference type="ChEBI" id="CHEBI:18248"/>
    </ligandPart>
</feature>
<feature type="binding site" description="axial binding residue" evidence="2">
    <location>
        <position position="97"/>
    </location>
    <ligand>
        <name>heme b</name>
        <dbReference type="ChEBI" id="CHEBI:60344"/>
        <label>b566</label>
    </ligand>
    <ligandPart>
        <name>Fe</name>
        <dbReference type="ChEBI" id="CHEBI:18248"/>
    </ligandPart>
</feature>
<feature type="binding site" description="axial binding residue" evidence="2">
    <location>
        <position position="182"/>
    </location>
    <ligand>
        <name>heme b</name>
        <dbReference type="ChEBI" id="CHEBI:60344"/>
        <label>b562</label>
    </ligand>
    <ligandPart>
        <name>Fe</name>
        <dbReference type="ChEBI" id="CHEBI:18248"/>
    </ligandPart>
</feature>
<feature type="binding site" description="axial binding residue" evidence="2">
    <location>
        <position position="196"/>
    </location>
    <ligand>
        <name>heme b</name>
        <dbReference type="ChEBI" id="CHEBI:60344"/>
        <label>b566</label>
    </ligand>
    <ligandPart>
        <name>Fe</name>
        <dbReference type="ChEBI" id="CHEBI:18248"/>
    </ligandPart>
</feature>
<feature type="binding site" evidence="2">
    <location>
        <position position="201"/>
    </location>
    <ligand>
        <name>a ubiquinone</name>
        <dbReference type="ChEBI" id="CHEBI:16389"/>
    </ligand>
</feature>
<keyword id="KW-0249">Electron transport</keyword>
<keyword id="KW-0349">Heme</keyword>
<keyword id="KW-0408">Iron</keyword>
<keyword id="KW-0472">Membrane</keyword>
<keyword id="KW-0479">Metal-binding</keyword>
<keyword id="KW-0496">Mitochondrion</keyword>
<keyword id="KW-0999">Mitochondrion inner membrane</keyword>
<keyword id="KW-0679">Respiratory chain</keyword>
<keyword id="KW-0812">Transmembrane</keyword>
<keyword id="KW-1133">Transmembrane helix</keyword>
<keyword id="KW-0813">Transport</keyword>
<keyword id="KW-0830">Ubiquinone</keyword>
<proteinExistence type="inferred from homology"/>
<comment type="function">
    <text evidence="2">Component of the ubiquinol-cytochrome c reductase complex (complex III or cytochrome b-c1 complex) that is part of the mitochondrial respiratory chain. The b-c1 complex mediates electron transfer from ubiquinol to cytochrome c. Contributes to the generation of a proton gradient across the mitochondrial membrane that is then used for ATP synthesis.</text>
</comment>
<comment type="cofactor">
    <cofactor evidence="2">
        <name>heme b</name>
        <dbReference type="ChEBI" id="CHEBI:60344"/>
    </cofactor>
    <text evidence="2">Binds 2 heme b groups non-covalently.</text>
</comment>
<comment type="subunit">
    <text evidence="2">The cytochrome bc1 complex contains 11 subunits: 3 respiratory subunits (MT-CYB, CYC1 and UQCRFS1), 2 core proteins (UQCRC1 and UQCRC2) and 6 low-molecular weight proteins (UQCRH/QCR6, UQCRB/QCR7, UQCRQ/QCR8, UQCR10/QCR9, UQCR11/QCR10 and a cleavage product of UQCRFS1). This cytochrome bc1 complex then forms a dimer.</text>
</comment>
<comment type="subcellular location">
    <subcellularLocation>
        <location evidence="2">Mitochondrion inner membrane</location>
        <topology evidence="2">Multi-pass membrane protein</topology>
    </subcellularLocation>
</comment>
<comment type="miscellaneous">
    <text evidence="1">Heme 1 (or BL or b562) is low-potential and absorbs at about 562 nm, and heme 2 (or BH or b566) is high-potential and absorbs at about 566 nm.</text>
</comment>
<comment type="similarity">
    <text evidence="3 4">Belongs to the cytochrome b family.</text>
</comment>
<comment type="caution">
    <text evidence="2">The full-length protein contains only eight transmembrane helices, not nine as predicted by bioinformatics tools.</text>
</comment>
<organism>
    <name type="scientific">Xerospermophilus perotensis</name>
    <name type="common">Perote ground squirrel</name>
    <name type="synonym">Spermophilus perotensis</name>
    <dbReference type="NCBI Taxonomy" id="99854"/>
    <lineage>
        <taxon>Eukaryota</taxon>
        <taxon>Metazoa</taxon>
        <taxon>Chordata</taxon>
        <taxon>Craniata</taxon>
        <taxon>Vertebrata</taxon>
        <taxon>Euteleostomi</taxon>
        <taxon>Mammalia</taxon>
        <taxon>Eutheria</taxon>
        <taxon>Euarchontoglires</taxon>
        <taxon>Glires</taxon>
        <taxon>Rodentia</taxon>
        <taxon>Sciuromorpha</taxon>
        <taxon>Sciuridae</taxon>
        <taxon>Xerinae</taxon>
        <taxon>Marmotini</taxon>
        <taxon>Xerospermophilus</taxon>
    </lineage>
</organism>
<protein>
    <recommendedName>
        <fullName>Cytochrome b</fullName>
    </recommendedName>
    <alternativeName>
        <fullName>Complex III subunit 3</fullName>
    </alternativeName>
    <alternativeName>
        <fullName>Complex III subunit III</fullName>
    </alternativeName>
    <alternativeName>
        <fullName>Cytochrome b-c1 complex subunit 3</fullName>
    </alternativeName>
    <alternativeName>
        <fullName>Ubiquinol-cytochrome-c reductase complex cytochrome b subunit</fullName>
    </alternativeName>
</protein>
<geneLocation type="mitochondrion"/>
<evidence type="ECO:0000250" key="1"/>
<evidence type="ECO:0000250" key="2">
    <source>
        <dbReference type="UniProtKB" id="P00157"/>
    </source>
</evidence>
<evidence type="ECO:0000255" key="3">
    <source>
        <dbReference type="PROSITE-ProRule" id="PRU00967"/>
    </source>
</evidence>
<evidence type="ECO:0000255" key="4">
    <source>
        <dbReference type="PROSITE-ProRule" id="PRU00968"/>
    </source>
</evidence>
<dbReference type="EMBL" id="AF157948">
    <property type="protein sequence ID" value="AAD50232.1"/>
    <property type="molecule type" value="Genomic_DNA"/>
</dbReference>
<dbReference type="GO" id="GO:0005743">
    <property type="term" value="C:mitochondrial inner membrane"/>
    <property type="evidence" value="ECO:0007669"/>
    <property type="project" value="UniProtKB-SubCell"/>
</dbReference>
<dbReference type="GO" id="GO:0045275">
    <property type="term" value="C:respiratory chain complex III"/>
    <property type="evidence" value="ECO:0007669"/>
    <property type="project" value="InterPro"/>
</dbReference>
<dbReference type="GO" id="GO:0046872">
    <property type="term" value="F:metal ion binding"/>
    <property type="evidence" value="ECO:0007669"/>
    <property type="project" value="UniProtKB-KW"/>
</dbReference>
<dbReference type="GO" id="GO:0008121">
    <property type="term" value="F:ubiquinol-cytochrome-c reductase activity"/>
    <property type="evidence" value="ECO:0007669"/>
    <property type="project" value="InterPro"/>
</dbReference>
<dbReference type="GO" id="GO:0006122">
    <property type="term" value="P:mitochondrial electron transport, ubiquinol to cytochrome c"/>
    <property type="evidence" value="ECO:0007669"/>
    <property type="project" value="TreeGrafter"/>
</dbReference>
<dbReference type="CDD" id="cd00290">
    <property type="entry name" value="cytochrome_b_C"/>
    <property type="match status" value="1"/>
</dbReference>
<dbReference type="CDD" id="cd00284">
    <property type="entry name" value="Cytochrome_b_N"/>
    <property type="match status" value="1"/>
</dbReference>
<dbReference type="FunFam" id="1.20.810.10:FF:000002">
    <property type="entry name" value="Cytochrome b"/>
    <property type="match status" value="1"/>
</dbReference>
<dbReference type="Gene3D" id="1.20.810.10">
    <property type="entry name" value="Cytochrome Bc1 Complex, Chain C"/>
    <property type="match status" value="1"/>
</dbReference>
<dbReference type="InterPro" id="IPR005798">
    <property type="entry name" value="Cyt_b/b6_C"/>
</dbReference>
<dbReference type="InterPro" id="IPR036150">
    <property type="entry name" value="Cyt_b/b6_C_sf"/>
</dbReference>
<dbReference type="InterPro" id="IPR005797">
    <property type="entry name" value="Cyt_b/b6_N"/>
</dbReference>
<dbReference type="InterPro" id="IPR027387">
    <property type="entry name" value="Cytb/b6-like_sf"/>
</dbReference>
<dbReference type="InterPro" id="IPR030689">
    <property type="entry name" value="Cytochrome_b"/>
</dbReference>
<dbReference type="InterPro" id="IPR048260">
    <property type="entry name" value="Cytochrome_b_C_euk/bac"/>
</dbReference>
<dbReference type="InterPro" id="IPR048259">
    <property type="entry name" value="Cytochrome_b_N_euk/bac"/>
</dbReference>
<dbReference type="InterPro" id="IPR016174">
    <property type="entry name" value="Di-haem_cyt_TM"/>
</dbReference>
<dbReference type="PANTHER" id="PTHR19271">
    <property type="entry name" value="CYTOCHROME B"/>
    <property type="match status" value="1"/>
</dbReference>
<dbReference type="PANTHER" id="PTHR19271:SF16">
    <property type="entry name" value="CYTOCHROME B"/>
    <property type="match status" value="1"/>
</dbReference>
<dbReference type="Pfam" id="PF00032">
    <property type="entry name" value="Cytochrom_B_C"/>
    <property type="match status" value="1"/>
</dbReference>
<dbReference type="Pfam" id="PF00033">
    <property type="entry name" value="Cytochrome_B"/>
    <property type="match status" value="1"/>
</dbReference>
<dbReference type="PIRSF" id="PIRSF038885">
    <property type="entry name" value="COB"/>
    <property type="match status" value="1"/>
</dbReference>
<dbReference type="SUPFAM" id="SSF81648">
    <property type="entry name" value="a domain/subunit of cytochrome bc1 complex (Ubiquinol-cytochrome c reductase)"/>
    <property type="match status" value="1"/>
</dbReference>
<dbReference type="SUPFAM" id="SSF81342">
    <property type="entry name" value="Transmembrane di-heme cytochromes"/>
    <property type="match status" value="1"/>
</dbReference>
<dbReference type="PROSITE" id="PS51003">
    <property type="entry name" value="CYTB_CTER"/>
    <property type="match status" value="1"/>
</dbReference>
<dbReference type="PROSITE" id="PS51002">
    <property type="entry name" value="CYTB_NTER"/>
    <property type="match status" value="1"/>
</dbReference>
<accession>Q9TF10</accession>
<name>CYB_XERPE</name>
<reference key="1">
    <citation type="submission" date="1999-06" db="EMBL/GenBank/DDBJ databases">
        <title>A molecular phylogeny of ground squirrels and prairie dogs.</title>
        <authorList>
            <person name="Harrison R.G."/>
            <person name="Sherman P.W."/>
            <person name="Yensen E."/>
            <person name="Hoffmann R.S."/>
            <person name="Bogdanowicz S.M."/>
        </authorList>
    </citation>
    <scope>NUCLEOTIDE SEQUENCE [GENOMIC DNA]</scope>
    <source>
        <strain>Isolate S99</strain>
    </source>
</reference>
<gene>
    <name type="primary">MT-CYB</name>
    <name type="synonym">COB</name>
    <name type="synonym">CYTB</name>
    <name type="synonym">MTCYB</name>
</gene>
<sequence length="379" mass="42910">MTNTRKTHPLIKIINHSFIDLPAPSNISAWWNFGSLLGLCLAIQILTGLFLAMHYTSDTMTAFSSVTHICRDVNYGWLIRYMHANGASMFFICLFLHVGRGLYYGSYTYFETWNIGVILLXAVMATAFMGYVLPWGQMSFWGATVITNLLSAIPYIGTTLVEWIWGGFSVDKATLTRFFAFHFILPFIITALVMVHLLFLHETGSNNPSGLVSDSDKIPFHPYYTIKDILGILLLIMALMTLILFSPDLLGDPDNYTPANPLSTPPHIKPEWYFLFAYAILRSIPNKLGGVLALVFSILILMLFPLLHLSKQRSMMFRPLSQCMFWILVADLFTLTWIGGQPVEYPFIVIGQLASILYFTIILLILPTVSLIENKLLKW</sequence>